<keyword id="KW-0963">Cytoplasm</keyword>
<keyword id="KW-0620">Polyamine biosynthesis</keyword>
<keyword id="KW-0745">Spermidine biosynthesis</keyword>
<keyword id="KW-0808">Transferase</keyword>
<name>SPEE_SALDC</name>
<dbReference type="EC" id="2.5.1.16" evidence="1"/>
<dbReference type="EMBL" id="CP001144">
    <property type="protein sequence ID" value="ACH74476.1"/>
    <property type="molecule type" value="Genomic_DNA"/>
</dbReference>
<dbReference type="RefSeq" id="WP_000829968.1">
    <property type="nucleotide sequence ID" value="NC_011205.1"/>
</dbReference>
<dbReference type="SMR" id="B5FIB4"/>
<dbReference type="KEGG" id="sed:SeD_A0181"/>
<dbReference type="HOGENOM" id="CLU_048199_0_0_6"/>
<dbReference type="UniPathway" id="UPA00248">
    <property type="reaction ID" value="UER00314"/>
</dbReference>
<dbReference type="Proteomes" id="UP000008322">
    <property type="component" value="Chromosome"/>
</dbReference>
<dbReference type="GO" id="GO:0005829">
    <property type="term" value="C:cytosol"/>
    <property type="evidence" value="ECO:0007669"/>
    <property type="project" value="TreeGrafter"/>
</dbReference>
<dbReference type="GO" id="GO:0004766">
    <property type="term" value="F:spermidine synthase activity"/>
    <property type="evidence" value="ECO:0007669"/>
    <property type="project" value="UniProtKB-UniRule"/>
</dbReference>
<dbReference type="GO" id="GO:0008295">
    <property type="term" value="P:spermidine biosynthetic process"/>
    <property type="evidence" value="ECO:0007669"/>
    <property type="project" value="UniProtKB-UniRule"/>
</dbReference>
<dbReference type="CDD" id="cd02440">
    <property type="entry name" value="AdoMet_MTases"/>
    <property type="match status" value="1"/>
</dbReference>
<dbReference type="FunFam" id="2.30.140.10:FF:000002">
    <property type="entry name" value="Polyamine aminopropyltransferase"/>
    <property type="match status" value="1"/>
</dbReference>
<dbReference type="FunFam" id="3.40.50.150:FF:000026">
    <property type="entry name" value="Polyamine aminopropyltransferase"/>
    <property type="match status" value="1"/>
</dbReference>
<dbReference type="Gene3D" id="2.30.140.10">
    <property type="entry name" value="Spermidine synthase, tetramerisation domain"/>
    <property type="match status" value="1"/>
</dbReference>
<dbReference type="Gene3D" id="3.40.50.150">
    <property type="entry name" value="Vaccinia Virus protein VP39"/>
    <property type="match status" value="1"/>
</dbReference>
<dbReference type="HAMAP" id="MF_00198">
    <property type="entry name" value="Spermidine_synth"/>
    <property type="match status" value="1"/>
</dbReference>
<dbReference type="InterPro" id="IPR030374">
    <property type="entry name" value="PABS"/>
</dbReference>
<dbReference type="InterPro" id="IPR030373">
    <property type="entry name" value="PABS_CS"/>
</dbReference>
<dbReference type="InterPro" id="IPR029063">
    <property type="entry name" value="SAM-dependent_MTases_sf"/>
</dbReference>
<dbReference type="InterPro" id="IPR001045">
    <property type="entry name" value="Spermi_synthase"/>
</dbReference>
<dbReference type="InterPro" id="IPR035246">
    <property type="entry name" value="Spermidine_synt_N"/>
</dbReference>
<dbReference type="InterPro" id="IPR037163">
    <property type="entry name" value="Spermidine_synt_N_sf"/>
</dbReference>
<dbReference type="NCBIfam" id="NF037959">
    <property type="entry name" value="MFS_SpdSyn"/>
    <property type="match status" value="1"/>
</dbReference>
<dbReference type="NCBIfam" id="NF002010">
    <property type="entry name" value="PRK00811.1"/>
    <property type="match status" value="1"/>
</dbReference>
<dbReference type="NCBIfam" id="TIGR00417">
    <property type="entry name" value="speE"/>
    <property type="match status" value="1"/>
</dbReference>
<dbReference type="PANTHER" id="PTHR11558:SF11">
    <property type="entry name" value="SPERMIDINE SYNTHASE"/>
    <property type="match status" value="1"/>
</dbReference>
<dbReference type="PANTHER" id="PTHR11558">
    <property type="entry name" value="SPERMIDINE/SPERMINE SYNTHASE"/>
    <property type="match status" value="1"/>
</dbReference>
<dbReference type="Pfam" id="PF17284">
    <property type="entry name" value="Spermine_synt_N"/>
    <property type="match status" value="1"/>
</dbReference>
<dbReference type="Pfam" id="PF01564">
    <property type="entry name" value="Spermine_synth"/>
    <property type="match status" value="1"/>
</dbReference>
<dbReference type="SUPFAM" id="SSF53335">
    <property type="entry name" value="S-adenosyl-L-methionine-dependent methyltransferases"/>
    <property type="match status" value="1"/>
</dbReference>
<dbReference type="PROSITE" id="PS01330">
    <property type="entry name" value="PABS_1"/>
    <property type="match status" value="1"/>
</dbReference>
<dbReference type="PROSITE" id="PS51006">
    <property type="entry name" value="PABS_2"/>
    <property type="match status" value="1"/>
</dbReference>
<sequence length="286" mass="32095">MAENTMWHETLHDQFGQYFAVDNVLYHEKTDHQDLIIFENAAFGRVMALDGVVQTTERDEFIYHEMMTHVPLLAHGHAKHVLIIGGGDGAMLREVTRHKNVETITMVEIDAGVVSFCRQYLPNHNAGSYDDPRFTLVIDDGVNFVNQTHQTFDVIISDCTDPIGPGESLFTSAFYEGCKRCLNPGGIFVAQNGVCFLQQDEALDSHRKLSHYFSDVGFYQAAIPTYYGGIMTFAWATDNDALRHLSSEIIQARFHAAGLKCRYYNPAIHAAAFALPQYLHDALSAQ</sequence>
<reference key="1">
    <citation type="journal article" date="2011" name="J. Bacteriol.">
        <title>Comparative genomics of 28 Salmonella enterica isolates: evidence for CRISPR-mediated adaptive sublineage evolution.</title>
        <authorList>
            <person name="Fricke W.F."/>
            <person name="Mammel M.K."/>
            <person name="McDermott P.F."/>
            <person name="Tartera C."/>
            <person name="White D.G."/>
            <person name="Leclerc J.E."/>
            <person name="Ravel J."/>
            <person name="Cebula T.A."/>
        </authorList>
    </citation>
    <scope>NUCLEOTIDE SEQUENCE [LARGE SCALE GENOMIC DNA]</scope>
    <source>
        <strain>CT_02021853</strain>
    </source>
</reference>
<comment type="function">
    <text evidence="1">Catalyzes the irreversible transfer of a propylamine group from the amino donor S-adenosylmethioninamine (decarboxy-AdoMet) to putrescine (1,4-diaminobutane) to yield spermidine.</text>
</comment>
<comment type="catalytic activity">
    <reaction evidence="1">
        <text>S-adenosyl 3-(methylsulfanyl)propylamine + putrescine = S-methyl-5'-thioadenosine + spermidine + H(+)</text>
        <dbReference type="Rhea" id="RHEA:12721"/>
        <dbReference type="ChEBI" id="CHEBI:15378"/>
        <dbReference type="ChEBI" id="CHEBI:17509"/>
        <dbReference type="ChEBI" id="CHEBI:57443"/>
        <dbReference type="ChEBI" id="CHEBI:57834"/>
        <dbReference type="ChEBI" id="CHEBI:326268"/>
        <dbReference type="EC" id="2.5.1.16"/>
    </reaction>
</comment>
<comment type="pathway">
    <text evidence="1">Amine and polyamine biosynthesis; spermidine biosynthesis; spermidine from putrescine: step 1/1.</text>
</comment>
<comment type="subunit">
    <text evidence="1">Homodimer or homotetramer.</text>
</comment>
<comment type="subcellular location">
    <subcellularLocation>
        <location evidence="1">Cytoplasm</location>
    </subcellularLocation>
</comment>
<comment type="similarity">
    <text evidence="1">Belongs to the spermidine/spermine synthase family.</text>
</comment>
<organism>
    <name type="scientific">Salmonella dublin (strain CT_02021853)</name>
    <dbReference type="NCBI Taxonomy" id="439851"/>
    <lineage>
        <taxon>Bacteria</taxon>
        <taxon>Pseudomonadati</taxon>
        <taxon>Pseudomonadota</taxon>
        <taxon>Gammaproteobacteria</taxon>
        <taxon>Enterobacterales</taxon>
        <taxon>Enterobacteriaceae</taxon>
        <taxon>Salmonella</taxon>
    </lineage>
</organism>
<accession>B5FIB4</accession>
<proteinExistence type="inferred from homology"/>
<protein>
    <recommendedName>
        <fullName evidence="1">Polyamine aminopropyltransferase</fullName>
    </recommendedName>
    <alternativeName>
        <fullName evidence="1">Putrescine aminopropyltransferase</fullName>
        <shortName evidence="1">PAPT</shortName>
    </alternativeName>
    <alternativeName>
        <fullName evidence="1">Spermidine synthase</fullName>
        <shortName evidence="1">SPDS</shortName>
        <shortName evidence="1">SPDSY</shortName>
        <ecNumber evidence="1">2.5.1.16</ecNumber>
    </alternativeName>
</protein>
<feature type="chain" id="PRO_1000099294" description="Polyamine aminopropyltransferase">
    <location>
        <begin position="1"/>
        <end position="286"/>
    </location>
</feature>
<feature type="domain" description="PABS" evidence="1">
    <location>
        <begin position="5"/>
        <end position="238"/>
    </location>
</feature>
<feature type="active site" description="Proton acceptor" evidence="1">
    <location>
        <position position="158"/>
    </location>
</feature>
<feature type="binding site" evidence="1">
    <location>
        <position position="33"/>
    </location>
    <ligand>
        <name>S-methyl-5'-thioadenosine</name>
        <dbReference type="ChEBI" id="CHEBI:17509"/>
    </ligand>
</feature>
<feature type="binding site" evidence="1">
    <location>
        <position position="64"/>
    </location>
    <ligand>
        <name>spermidine</name>
        <dbReference type="ChEBI" id="CHEBI:57834"/>
    </ligand>
</feature>
<feature type="binding site" evidence="1">
    <location>
        <position position="88"/>
    </location>
    <ligand>
        <name>spermidine</name>
        <dbReference type="ChEBI" id="CHEBI:57834"/>
    </ligand>
</feature>
<feature type="binding site" evidence="1">
    <location>
        <position position="108"/>
    </location>
    <ligand>
        <name>S-methyl-5'-thioadenosine</name>
        <dbReference type="ChEBI" id="CHEBI:17509"/>
    </ligand>
</feature>
<feature type="binding site" evidence="1">
    <location>
        <begin position="140"/>
        <end position="141"/>
    </location>
    <ligand>
        <name>S-methyl-5'-thioadenosine</name>
        <dbReference type="ChEBI" id="CHEBI:17509"/>
    </ligand>
</feature>
<feature type="binding site" evidence="1">
    <location>
        <begin position="158"/>
        <end position="161"/>
    </location>
    <ligand>
        <name>spermidine</name>
        <dbReference type="ChEBI" id="CHEBI:57834"/>
    </ligand>
</feature>
<feature type="binding site" evidence="1">
    <location>
        <position position="165"/>
    </location>
    <ligand>
        <name>S-methyl-5'-thioadenosine</name>
        <dbReference type="ChEBI" id="CHEBI:17509"/>
    </ligand>
</feature>
<gene>
    <name evidence="1" type="primary">speE</name>
    <name type="ordered locus">SeD_A0181</name>
</gene>
<evidence type="ECO:0000255" key="1">
    <source>
        <dbReference type="HAMAP-Rule" id="MF_00198"/>
    </source>
</evidence>